<feature type="signal peptide" evidence="2">
    <location>
        <begin position="1"/>
        <end position="21"/>
    </location>
</feature>
<feature type="propeptide" id="PRO_0000398419" evidence="3">
    <location>
        <begin position="22"/>
        <end position="29"/>
    </location>
</feature>
<feature type="peptide" id="PRO_0000398420" description="U10-theraphotoxin-Cg1a 1">
    <location>
        <begin position="30"/>
        <end position="66"/>
    </location>
</feature>
<feature type="disulfide bond" evidence="1">
    <location>
        <begin position="31"/>
        <end position="46"/>
    </location>
</feature>
<feature type="disulfide bond" evidence="1">
    <location>
        <begin position="38"/>
        <end position="51"/>
    </location>
</feature>
<feature type="disulfide bond" evidence="1">
    <location>
        <begin position="45"/>
        <end position="58"/>
    </location>
</feature>
<reference key="1">
    <citation type="journal article" date="2008" name="Cell. Mol. Life Sci.">
        <title>Molecular diversity and evolution of cystine knot toxins of the tarantula Chilobrachys jingzhao.</title>
        <authorList>
            <person name="Chen J."/>
            <person name="Deng M."/>
            <person name="He Q."/>
            <person name="Meng E."/>
            <person name="Jiang L."/>
            <person name="Liao Z."/>
            <person name="Rong M."/>
            <person name="Liang S."/>
        </authorList>
    </citation>
    <scope>NUCLEOTIDE SEQUENCE [LARGE SCALE MRNA]</scope>
    <source>
        <tissue>Venom gland</tissue>
    </source>
</reference>
<reference key="2">
    <citation type="journal article" date="2007" name="Proteomics">
        <title>Proteomic and peptidomic analysis of the venom from Chinese tarantula Chilobrachys jingzhao.</title>
        <authorList>
            <person name="Liao Z."/>
            <person name="Cao J."/>
            <person name="Li S."/>
            <person name="Yan X."/>
            <person name="Hu W."/>
            <person name="He Q."/>
            <person name="Chen J."/>
            <person name="Tang J."/>
            <person name="Xie J."/>
            <person name="Liang S."/>
        </authorList>
    </citation>
    <scope>PROTEIN SEQUENCE OF 30-41</scope>
    <scope>IDENTIFICATION BY MASS SPECTROMETRY</scope>
    <source>
        <tissue>Venom</tissue>
    </source>
</reference>
<name>JZ13A_CHIGU</name>
<protein>
    <recommendedName>
        <fullName>U10-theraphotoxin-Cg1a 1</fullName>
        <shortName>U10-TRTX-Cg1a</shortName>
    </recommendedName>
    <alternativeName>
        <fullName evidence="6">Jingzhaotoxin-13</fullName>
        <shortName evidence="6">JZTX-13</shortName>
    </alternativeName>
    <alternativeName>
        <fullName evidence="4">Peptide F5-18.88</fullName>
    </alternativeName>
</protein>
<sequence length="66" mass="7333">MKTSVLFVIFGLALLFCLSFAAELEDTGRQCGEFMWKCGAGKPTCCSGYDCSPTWKWCVLKSPGRR</sequence>
<organism>
    <name type="scientific">Chilobrachys guangxiensis</name>
    <name type="common">Chinese earth tiger tarantula</name>
    <name type="synonym">Chilobrachys jingzhao</name>
    <dbReference type="NCBI Taxonomy" id="278060"/>
    <lineage>
        <taxon>Eukaryota</taxon>
        <taxon>Metazoa</taxon>
        <taxon>Ecdysozoa</taxon>
        <taxon>Arthropoda</taxon>
        <taxon>Chelicerata</taxon>
        <taxon>Arachnida</taxon>
        <taxon>Araneae</taxon>
        <taxon>Mygalomorphae</taxon>
        <taxon>Theraphosidae</taxon>
        <taxon>Chilobrachys</taxon>
    </lineage>
</organism>
<dbReference type="EMBL" id="EU233860">
    <property type="protein sequence ID" value="ABY71679.1"/>
    <property type="molecule type" value="mRNA"/>
</dbReference>
<dbReference type="SMR" id="B1P1C9"/>
<dbReference type="ArachnoServer" id="AS000807">
    <property type="toxin name" value="U10-theraphotoxin-Cg1a"/>
</dbReference>
<dbReference type="GO" id="GO:0005576">
    <property type="term" value="C:extracellular region"/>
    <property type="evidence" value="ECO:0007669"/>
    <property type="project" value="UniProtKB-SubCell"/>
</dbReference>
<dbReference type="GO" id="GO:0008200">
    <property type="term" value="F:ion channel inhibitor activity"/>
    <property type="evidence" value="ECO:0007669"/>
    <property type="project" value="InterPro"/>
</dbReference>
<dbReference type="GO" id="GO:0090729">
    <property type="term" value="F:toxin activity"/>
    <property type="evidence" value="ECO:0007669"/>
    <property type="project" value="UniProtKB-KW"/>
</dbReference>
<dbReference type="InterPro" id="IPR011696">
    <property type="entry name" value="Huwentoxin-1"/>
</dbReference>
<dbReference type="InterPro" id="IPR013140">
    <property type="entry name" value="Huwentoxin_CS1"/>
</dbReference>
<dbReference type="Pfam" id="PF07740">
    <property type="entry name" value="Toxin_12"/>
    <property type="match status" value="1"/>
</dbReference>
<dbReference type="SUPFAM" id="SSF57059">
    <property type="entry name" value="omega toxin-like"/>
    <property type="match status" value="1"/>
</dbReference>
<dbReference type="PROSITE" id="PS60021">
    <property type="entry name" value="HWTX_1"/>
    <property type="match status" value="1"/>
</dbReference>
<proteinExistence type="evidence at protein level"/>
<comment type="function">
    <text>Probable ion channel inhibitor.</text>
</comment>
<comment type="subcellular location">
    <subcellularLocation>
        <location>Secreted</location>
    </subcellularLocation>
</comment>
<comment type="tissue specificity">
    <text>Expressed by the venom gland.</text>
</comment>
<comment type="domain">
    <text evidence="1">The presence of a 'disulfide through disulfide knot' structurally defines this protein as a knottin.</text>
</comment>
<comment type="similarity">
    <text evidence="5">Belongs to the neurotoxin 10 (Hwtx-1) family. 29 (Jztx-13) subfamily.</text>
</comment>
<keyword id="KW-0903">Direct protein sequencing</keyword>
<keyword id="KW-1015">Disulfide bond</keyword>
<keyword id="KW-0872">Ion channel impairing toxin</keyword>
<keyword id="KW-0960">Knottin</keyword>
<keyword id="KW-0964">Secreted</keyword>
<keyword id="KW-0732">Signal</keyword>
<keyword id="KW-0800">Toxin</keyword>
<evidence type="ECO:0000250" key="1"/>
<evidence type="ECO:0000255" key="2"/>
<evidence type="ECO:0000269" key="3">
    <source>
    </source>
</evidence>
<evidence type="ECO:0000303" key="4">
    <source>
    </source>
</evidence>
<evidence type="ECO:0000305" key="5"/>
<evidence type="ECO:0000312" key="6">
    <source>
        <dbReference type="EMBL" id="ABY71679.1"/>
    </source>
</evidence>
<accession>B1P1C9</accession>